<comment type="function">
    <text evidence="2">Component of the ribosome, a large ribonucleoprotein complex responsible for the synthesis of proteins in the cell. The small ribosomal subunit (SSU) binds messenger RNAs (mRNAs) and translates the encoded message by selecting cognate aminoacyl-transfer RNA (tRNA) molecules. The large subunit (LSU) contains the ribosomal catalytic site termed the peptidyl transferase center (PTC), which catalyzes the formation of peptide bonds, thereby polymerizing the amino acids delivered by tRNAs into a polypeptide chain. The nascent polypeptides leave the ribosome through a tunnel in the LSU and interact with protein factors that function in enzymatic processing, targeting, and the membrane insertion of nascent chains at the exit of the ribosomal tunnel. uS4 is involved in nucleolar processing of pre-18S ribosomal RNA and ribosome assembly.</text>
</comment>
<comment type="subunit">
    <text evidence="2">Component of the small ribosomal subunit (SSU). Mature yeast ribosomes consist of a small (40S) and a large (60S) subunit. The 40S small subunit contains 1 molecule of ribosomal RNA (18S rRNA) and at least 33 different proteins. The large 60S subunit contains 3 rRNA molecules (25S, 5.8S and 5S rRNA) and at least 46 different proteins. Interacts with snoRNA U3. uS11 interacts with MPP10. Component of the ribosomal small subunit (SSU) processome composed of at least 40 protein subunits and snoRNA U3.</text>
</comment>
<comment type="subcellular location">
    <subcellularLocation>
        <location evidence="5">Cytoplasm</location>
    </subcellularLocation>
</comment>
<comment type="miscellaneous">
    <text>There are 2 genes for uS4 in S.pombe.</text>
</comment>
<comment type="similarity">
    <text evidence="7">Belongs to the universal ribosomal protein uS4 family.</text>
</comment>
<proteinExistence type="evidence at protein level"/>
<reference key="1">
    <citation type="journal article" date="2002" name="Nature">
        <title>The genome sequence of Schizosaccharomyces pombe.</title>
        <authorList>
            <person name="Wood V."/>
            <person name="Gwilliam R."/>
            <person name="Rajandream M.A."/>
            <person name="Lyne M.H."/>
            <person name="Lyne R."/>
            <person name="Stewart A."/>
            <person name="Sgouros J.G."/>
            <person name="Peat N."/>
            <person name="Hayles J."/>
            <person name="Baker S.G."/>
            <person name="Basham D."/>
            <person name="Bowman S."/>
            <person name="Brooks K."/>
            <person name="Brown D."/>
            <person name="Brown S."/>
            <person name="Chillingworth T."/>
            <person name="Churcher C.M."/>
            <person name="Collins M."/>
            <person name="Connor R."/>
            <person name="Cronin A."/>
            <person name="Davis P."/>
            <person name="Feltwell T."/>
            <person name="Fraser A."/>
            <person name="Gentles S."/>
            <person name="Goble A."/>
            <person name="Hamlin N."/>
            <person name="Harris D.E."/>
            <person name="Hidalgo J."/>
            <person name="Hodgson G."/>
            <person name="Holroyd S."/>
            <person name="Hornsby T."/>
            <person name="Howarth S."/>
            <person name="Huckle E.J."/>
            <person name="Hunt S."/>
            <person name="Jagels K."/>
            <person name="James K.D."/>
            <person name="Jones L."/>
            <person name="Jones M."/>
            <person name="Leather S."/>
            <person name="McDonald S."/>
            <person name="McLean J."/>
            <person name="Mooney P."/>
            <person name="Moule S."/>
            <person name="Mungall K.L."/>
            <person name="Murphy L.D."/>
            <person name="Niblett D."/>
            <person name="Odell C."/>
            <person name="Oliver K."/>
            <person name="O'Neil S."/>
            <person name="Pearson D."/>
            <person name="Quail M.A."/>
            <person name="Rabbinowitsch E."/>
            <person name="Rutherford K.M."/>
            <person name="Rutter S."/>
            <person name="Saunders D."/>
            <person name="Seeger K."/>
            <person name="Sharp S."/>
            <person name="Skelton J."/>
            <person name="Simmonds M.N."/>
            <person name="Squares R."/>
            <person name="Squares S."/>
            <person name="Stevens K."/>
            <person name="Taylor K."/>
            <person name="Taylor R.G."/>
            <person name="Tivey A."/>
            <person name="Walsh S.V."/>
            <person name="Warren T."/>
            <person name="Whitehead S."/>
            <person name="Woodward J.R."/>
            <person name="Volckaert G."/>
            <person name="Aert R."/>
            <person name="Robben J."/>
            <person name="Grymonprez B."/>
            <person name="Weltjens I."/>
            <person name="Vanstreels E."/>
            <person name="Rieger M."/>
            <person name="Schaefer M."/>
            <person name="Mueller-Auer S."/>
            <person name="Gabel C."/>
            <person name="Fuchs M."/>
            <person name="Duesterhoeft A."/>
            <person name="Fritzc C."/>
            <person name="Holzer E."/>
            <person name="Moestl D."/>
            <person name="Hilbert H."/>
            <person name="Borzym K."/>
            <person name="Langer I."/>
            <person name="Beck A."/>
            <person name="Lehrach H."/>
            <person name="Reinhardt R."/>
            <person name="Pohl T.M."/>
            <person name="Eger P."/>
            <person name="Zimmermann W."/>
            <person name="Wedler H."/>
            <person name="Wambutt R."/>
            <person name="Purnelle B."/>
            <person name="Goffeau A."/>
            <person name="Cadieu E."/>
            <person name="Dreano S."/>
            <person name="Gloux S."/>
            <person name="Lelaure V."/>
            <person name="Mottier S."/>
            <person name="Galibert F."/>
            <person name="Aves S.J."/>
            <person name="Xiang Z."/>
            <person name="Hunt C."/>
            <person name="Moore K."/>
            <person name="Hurst S.M."/>
            <person name="Lucas M."/>
            <person name="Rochet M."/>
            <person name="Gaillardin C."/>
            <person name="Tallada V.A."/>
            <person name="Garzon A."/>
            <person name="Thode G."/>
            <person name="Daga R.R."/>
            <person name="Cruzado L."/>
            <person name="Jimenez J."/>
            <person name="Sanchez M."/>
            <person name="del Rey F."/>
            <person name="Benito J."/>
            <person name="Dominguez A."/>
            <person name="Revuelta J.L."/>
            <person name="Moreno S."/>
            <person name="Armstrong J."/>
            <person name="Forsburg S.L."/>
            <person name="Cerutti L."/>
            <person name="Lowe T."/>
            <person name="McCombie W.R."/>
            <person name="Paulsen I."/>
            <person name="Potashkin J."/>
            <person name="Shpakovski G.V."/>
            <person name="Ussery D."/>
            <person name="Barrell B.G."/>
            <person name="Nurse P."/>
        </authorList>
    </citation>
    <scope>NUCLEOTIDE SEQUENCE [LARGE SCALE GENOMIC DNA]</scope>
    <source>
        <strain>972 / ATCC 24843</strain>
    </source>
</reference>
<reference key="2">
    <citation type="submission" date="1999-07" db="EMBL/GenBank/DDBJ databases">
        <title>S. pombe ribosomal protein S9 homolog.</title>
        <authorList>
            <person name="Kawamukai M."/>
        </authorList>
    </citation>
    <scope>NUCLEOTIDE SEQUENCE [MRNA] OF 4-192</scope>
</reference>
<reference key="3">
    <citation type="journal article" date="2006" name="Nat. Biotechnol.">
        <title>ORFeome cloning and global analysis of protein localization in the fission yeast Schizosaccharomyces pombe.</title>
        <authorList>
            <person name="Matsuyama A."/>
            <person name="Arai R."/>
            <person name="Yashiroda Y."/>
            <person name="Shirai A."/>
            <person name="Kamata A."/>
            <person name="Sekido S."/>
            <person name="Kobayashi Y."/>
            <person name="Hashimoto A."/>
            <person name="Hamamoto M."/>
            <person name="Hiraoka Y."/>
            <person name="Horinouchi S."/>
            <person name="Yoshida M."/>
        </authorList>
    </citation>
    <scope>SUBCELLULAR LOCATION [LARGE SCALE ANALYSIS]</scope>
</reference>
<reference key="4">
    <citation type="journal article" date="2008" name="J. Proteome Res.">
        <title>Phosphoproteome analysis of fission yeast.</title>
        <authorList>
            <person name="Wilson-Grady J.T."/>
            <person name="Villen J."/>
            <person name="Gygi S.P."/>
        </authorList>
    </citation>
    <scope>PHOSPHORYLATION [LARGE SCALE ANALYSIS] AT SER-89 AND SER-179</scope>
    <scope>IDENTIFICATION BY MASS SPECTROMETRY</scope>
</reference>
<protein>
    <recommendedName>
        <fullName evidence="7">Small ribosomal subunit protein uS4B</fullName>
    </recommendedName>
    <alternativeName>
        <fullName>40S ribosomal protein S9-B</fullName>
    </alternativeName>
</protein>
<accession>O59675</accession>
<accession>Q9UTY5</accession>
<accession>Q9UUK9</accession>
<dbReference type="EMBL" id="CU329671">
    <property type="protein sequence ID" value="CAA18389.1"/>
    <property type="molecule type" value="Genomic_DNA"/>
</dbReference>
<dbReference type="EMBL" id="AB029515">
    <property type="protein sequence ID" value="BAA82319.1"/>
    <property type="molecule type" value="mRNA"/>
</dbReference>
<dbReference type="PIR" id="T40083">
    <property type="entry name" value="T40083"/>
</dbReference>
<dbReference type="PIR" id="T43516">
    <property type="entry name" value="T43516"/>
</dbReference>
<dbReference type="RefSeq" id="NP_595840.1">
    <property type="nucleotide sequence ID" value="NM_001021744.2"/>
</dbReference>
<dbReference type="PDB" id="9AXT">
    <property type="method" value="EM"/>
    <property type="resolution" value="2.40 A"/>
    <property type="chains" value="AM=1-192"/>
</dbReference>
<dbReference type="PDB" id="9AXV">
    <property type="method" value="EM"/>
    <property type="resolution" value="2.40 A"/>
    <property type="chains" value="AM=1-192"/>
</dbReference>
<dbReference type="PDBsum" id="9AXT"/>
<dbReference type="PDBsum" id="9AXV"/>
<dbReference type="EMDB" id="EMD-43972"/>
<dbReference type="EMDB" id="EMD-43976"/>
<dbReference type="SMR" id="O59675"/>
<dbReference type="BioGRID" id="276896">
    <property type="interactions" value="8"/>
</dbReference>
<dbReference type="FunCoup" id="O59675">
    <property type="interactions" value="494"/>
</dbReference>
<dbReference type="STRING" id="284812.O59675"/>
<dbReference type="iPTMnet" id="O59675"/>
<dbReference type="PaxDb" id="4896-SPBC29A3.12.1"/>
<dbReference type="EnsemblFungi" id="SPBC29A3.12.1">
    <property type="protein sequence ID" value="SPBC29A3.12.1:pep"/>
    <property type="gene ID" value="SPBC29A3.12"/>
</dbReference>
<dbReference type="GeneID" id="2540367"/>
<dbReference type="KEGG" id="spo:2540367"/>
<dbReference type="PomBase" id="SPBC29A3.12">
    <property type="gene designation" value="rps902"/>
</dbReference>
<dbReference type="VEuPathDB" id="FungiDB:SPBC29A3.12"/>
<dbReference type="eggNOG" id="KOG3301">
    <property type="taxonomic scope" value="Eukaryota"/>
</dbReference>
<dbReference type="HOGENOM" id="CLU_089738_0_0_1"/>
<dbReference type="InParanoid" id="O59675"/>
<dbReference type="OMA" id="RQFITHG"/>
<dbReference type="PhylomeDB" id="O59675"/>
<dbReference type="PRO" id="PR:O59675"/>
<dbReference type="Proteomes" id="UP000002485">
    <property type="component" value="Chromosome II"/>
</dbReference>
<dbReference type="GO" id="GO:0005829">
    <property type="term" value="C:cytosol"/>
    <property type="evidence" value="ECO:0007005"/>
    <property type="project" value="PomBase"/>
</dbReference>
<dbReference type="GO" id="GO:0022627">
    <property type="term" value="C:cytosolic small ribosomal subunit"/>
    <property type="evidence" value="ECO:0000269"/>
    <property type="project" value="PomBase"/>
</dbReference>
<dbReference type="GO" id="GO:0019843">
    <property type="term" value="F:rRNA binding"/>
    <property type="evidence" value="ECO:0000318"/>
    <property type="project" value="GO_Central"/>
</dbReference>
<dbReference type="GO" id="GO:0003735">
    <property type="term" value="F:structural constituent of ribosome"/>
    <property type="evidence" value="ECO:0000318"/>
    <property type="project" value="GO_Central"/>
</dbReference>
<dbReference type="GO" id="GO:0002181">
    <property type="term" value="P:cytoplasmic translation"/>
    <property type="evidence" value="ECO:0000266"/>
    <property type="project" value="PomBase"/>
</dbReference>
<dbReference type="GO" id="GO:0042274">
    <property type="term" value="P:ribosomal small subunit biogenesis"/>
    <property type="evidence" value="ECO:0000318"/>
    <property type="project" value="GO_Central"/>
</dbReference>
<dbReference type="CDD" id="cd00165">
    <property type="entry name" value="S4"/>
    <property type="match status" value="1"/>
</dbReference>
<dbReference type="FunFam" id="3.10.290.10:FF:000021">
    <property type="entry name" value="40S ribosomal protein S9"/>
    <property type="match status" value="1"/>
</dbReference>
<dbReference type="Gene3D" id="3.10.290.10">
    <property type="entry name" value="RNA-binding S4 domain"/>
    <property type="match status" value="1"/>
</dbReference>
<dbReference type="InterPro" id="IPR022801">
    <property type="entry name" value="Ribosomal_uS4"/>
</dbReference>
<dbReference type="InterPro" id="IPR018079">
    <property type="entry name" value="Ribosomal_uS4_CS"/>
</dbReference>
<dbReference type="InterPro" id="IPR005710">
    <property type="entry name" value="Ribosomal_uS4_euk/arc"/>
</dbReference>
<dbReference type="InterPro" id="IPR001912">
    <property type="entry name" value="Ribosomal_uS4_N"/>
</dbReference>
<dbReference type="InterPro" id="IPR002942">
    <property type="entry name" value="S4_RNA-bd"/>
</dbReference>
<dbReference type="InterPro" id="IPR036986">
    <property type="entry name" value="S4_RNA-bd_sf"/>
</dbReference>
<dbReference type="NCBIfam" id="NF003139">
    <property type="entry name" value="PRK04051.1"/>
    <property type="match status" value="1"/>
</dbReference>
<dbReference type="NCBIfam" id="TIGR01018">
    <property type="entry name" value="uS4_arch"/>
    <property type="match status" value="1"/>
</dbReference>
<dbReference type="PANTHER" id="PTHR11831">
    <property type="entry name" value="30S 40S RIBOSOMAL PROTEIN"/>
    <property type="match status" value="1"/>
</dbReference>
<dbReference type="PANTHER" id="PTHR11831:SF5">
    <property type="entry name" value="40S RIBOSOMAL PROTEIN S9"/>
    <property type="match status" value="1"/>
</dbReference>
<dbReference type="Pfam" id="PF00163">
    <property type="entry name" value="Ribosomal_S4"/>
    <property type="match status" value="1"/>
</dbReference>
<dbReference type="Pfam" id="PF01479">
    <property type="entry name" value="S4"/>
    <property type="match status" value="1"/>
</dbReference>
<dbReference type="SMART" id="SM01390">
    <property type="entry name" value="Ribosomal_S4"/>
    <property type="match status" value="1"/>
</dbReference>
<dbReference type="SMART" id="SM00363">
    <property type="entry name" value="S4"/>
    <property type="match status" value="1"/>
</dbReference>
<dbReference type="SUPFAM" id="SSF55174">
    <property type="entry name" value="Alpha-L RNA-binding motif"/>
    <property type="match status" value="1"/>
</dbReference>
<dbReference type="PROSITE" id="PS00632">
    <property type="entry name" value="RIBOSOMAL_S4"/>
    <property type="match status" value="1"/>
</dbReference>
<dbReference type="PROSITE" id="PS50889">
    <property type="entry name" value="S4"/>
    <property type="match status" value="1"/>
</dbReference>
<sequence length="192" mass="22245">MPSAPRKQSKTYKVPRRPFESARLDAELKLAGEYGLRNKHEIWRVALTLSKIRRAARELLTLDEKDPKRLFEGNAIIRRLVRLGILDESRMKLDYVLALRIEDFLERRLQTQVFKLGLAKSIHHARVLIFQRHIRVGKQIVNVPSFVVRLDAQKHIDFALSSPYGGGRPGRCKRKRLRSQQEGGEGEEAEEE</sequence>
<evidence type="ECO:0000250" key="1"/>
<evidence type="ECO:0000250" key="2">
    <source>
        <dbReference type="UniProtKB" id="P05755"/>
    </source>
</evidence>
<evidence type="ECO:0000255" key="3">
    <source>
        <dbReference type="PROSITE-ProRule" id="PRU00182"/>
    </source>
</evidence>
<evidence type="ECO:0000256" key="4">
    <source>
        <dbReference type="SAM" id="MobiDB-lite"/>
    </source>
</evidence>
<evidence type="ECO:0000269" key="5">
    <source>
    </source>
</evidence>
<evidence type="ECO:0000269" key="6">
    <source>
    </source>
</evidence>
<evidence type="ECO:0000305" key="7"/>
<gene>
    <name type="primary">rps902</name>
    <name type="synonym">rps9b</name>
    <name type="ORF">SPBC29A3.12</name>
</gene>
<keyword id="KW-0002">3D-structure</keyword>
<keyword id="KW-0963">Cytoplasm</keyword>
<keyword id="KW-0597">Phosphoprotein</keyword>
<keyword id="KW-1185">Reference proteome</keyword>
<keyword id="KW-0687">Ribonucleoprotein</keyword>
<keyword id="KW-0689">Ribosomal protein</keyword>
<keyword id="KW-0694">RNA-binding</keyword>
<keyword id="KW-0699">rRNA-binding</keyword>
<organism>
    <name type="scientific">Schizosaccharomyces pombe (strain 972 / ATCC 24843)</name>
    <name type="common">Fission yeast</name>
    <dbReference type="NCBI Taxonomy" id="284812"/>
    <lineage>
        <taxon>Eukaryota</taxon>
        <taxon>Fungi</taxon>
        <taxon>Dikarya</taxon>
        <taxon>Ascomycota</taxon>
        <taxon>Taphrinomycotina</taxon>
        <taxon>Schizosaccharomycetes</taxon>
        <taxon>Schizosaccharomycetales</taxon>
        <taxon>Schizosaccharomycetaceae</taxon>
        <taxon>Schizosaccharomyces</taxon>
    </lineage>
</organism>
<name>RS9B_SCHPO</name>
<feature type="initiator methionine" description="Removed" evidence="1">
    <location>
        <position position="1"/>
    </location>
</feature>
<feature type="chain" id="PRO_0000132702" description="Small ribosomal subunit protein uS4B">
    <location>
        <begin position="2"/>
        <end position="192"/>
    </location>
</feature>
<feature type="domain" description="S4 RNA-binding" evidence="3">
    <location>
        <begin position="107"/>
        <end position="181"/>
    </location>
</feature>
<feature type="region of interest" description="Disordered" evidence="4">
    <location>
        <begin position="166"/>
        <end position="192"/>
    </location>
</feature>
<feature type="modified residue" description="Phosphoserine" evidence="6">
    <location>
        <position position="89"/>
    </location>
</feature>
<feature type="modified residue" description="Phosphoserine" evidence="6">
    <location>
        <position position="179"/>
    </location>
</feature>